<organism>
    <name type="scientific">Bacillus thuringiensis (strain Al Hakam)</name>
    <dbReference type="NCBI Taxonomy" id="412694"/>
    <lineage>
        <taxon>Bacteria</taxon>
        <taxon>Bacillati</taxon>
        <taxon>Bacillota</taxon>
        <taxon>Bacilli</taxon>
        <taxon>Bacillales</taxon>
        <taxon>Bacillaceae</taxon>
        <taxon>Bacillus</taxon>
        <taxon>Bacillus cereus group</taxon>
    </lineage>
</organism>
<feature type="chain" id="PRO_1000051013" description="Small ribosomal subunit protein uS19">
    <location>
        <begin position="1"/>
        <end position="92"/>
    </location>
</feature>
<comment type="function">
    <text evidence="1">Protein S19 forms a complex with S13 that binds strongly to the 16S ribosomal RNA.</text>
</comment>
<comment type="similarity">
    <text evidence="1">Belongs to the universal ribosomal protein uS19 family.</text>
</comment>
<evidence type="ECO:0000255" key="1">
    <source>
        <dbReference type="HAMAP-Rule" id="MF_00531"/>
    </source>
</evidence>
<evidence type="ECO:0000305" key="2"/>
<protein>
    <recommendedName>
        <fullName evidence="1">Small ribosomal subunit protein uS19</fullName>
    </recommendedName>
    <alternativeName>
        <fullName evidence="2">30S ribosomal protein S19</fullName>
    </alternativeName>
</protein>
<keyword id="KW-0687">Ribonucleoprotein</keyword>
<keyword id="KW-0689">Ribosomal protein</keyword>
<keyword id="KW-0694">RNA-binding</keyword>
<keyword id="KW-0699">rRNA-binding</keyword>
<dbReference type="EMBL" id="CP000485">
    <property type="protein sequence ID" value="ABK83527.1"/>
    <property type="molecule type" value="Genomic_DNA"/>
</dbReference>
<dbReference type="RefSeq" id="WP_000124453.1">
    <property type="nucleotide sequence ID" value="NC_008600.1"/>
</dbReference>
<dbReference type="SMR" id="A0R8I4"/>
<dbReference type="GeneID" id="93010939"/>
<dbReference type="KEGG" id="btl:BALH_0112"/>
<dbReference type="HOGENOM" id="CLU_144911_0_1_9"/>
<dbReference type="GO" id="GO:0005737">
    <property type="term" value="C:cytoplasm"/>
    <property type="evidence" value="ECO:0007669"/>
    <property type="project" value="UniProtKB-ARBA"/>
</dbReference>
<dbReference type="GO" id="GO:0015935">
    <property type="term" value="C:small ribosomal subunit"/>
    <property type="evidence" value="ECO:0007669"/>
    <property type="project" value="InterPro"/>
</dbReference>
<dbReference type="GO" id="GO:0019843">
    <property type="term" value="F:rRNA binding"/>
    <property type="evidence" value="ECO:0007669"/>
    <property type="project" value="UniProtKB-UniRule"/>
</dbReference>
<dbReference type="GO" id="GO:0003735">
    <property type="term" value="F:structural constituent of ribosome"/>
    <property type="evidence" value="ECO:0007669"/>
    <property type="project" value="InterPro"/>
</dbReference>
<dbReference type="GO" id="GO:0000028">
    <property type="term" value="P:ribosomal small subunit assembly"/>
    <property type="evidence" value="ECO:0007669"/>
    <property type="project" value="TreeGrafter"/>
</dbReference>
<dbReference type="GO" id="GO:0006412">
    <property type="term" value="P:translation"/>
    <property type="evidence" value="ECO:0007669"/>
    <property type="project" value="UniProtKB-UniRule"/>
</dbReference>
<dbReference type="FunFam" id="3.30.860.10:FF:000001">
    <property type="entry name" value="30S ribosomal protein S19"/>
    <property type="match status" value="1"/>
</dbReference>
<dbReference type="Gene3D" id="3.30.860.10">
    <property type="entry name" value="30s Ribosomal Protein S19, Chain A"/>
    <property type="match status" value="1"/>
</dbReference>
<dbReference type="HAMAP" id="MF_00531">
    <property type="entry name" value="Ribosomal_uS19"/>
    <property type="match status" value="1"/>
</dbReference>
<dbReference type="InterPro" id="IPR002222">
    <property type="entry name" value="Ribosomal_uS19"/>
</dbReference>
<dbReference type="InterPro" id="IPR005732">
    <property type="entry name" value="Ribosomal_uS19_bac-type"/>
</dbReference>
<dbReference type="InterPro" id="IPR020934">
    <property type="entry name" value="Ribosomal_uS19_CS"/>
</dbReference>
<dbReference type="InterPro" id="IPR023575">
    <property type="entry name" value="Ribosomal_uS19_SF"/>
</dbReference>
<dbReference type="NCBIfam" id="TIGR01050">
    <property type="entry name" value="rpsS_bact"/>
    <property type="match status" value="1"/>
</dbReference>
<dbReference type="PANTHER" id="PTHR11880">
    <property type="entry name" value="RIBOSOMAL PROTEIN S19P FAMILY MEMBER"/>
    <property type="match status" value="1"/>
</dbReference>
<dbReference type="PANTHER" id="PTHR11880:SF8">
    <property type="entry name" value="SMALL RIBOSOMAL SUBUNIT PROTEIN US19M"/>
    <property type="match status" value="1"/>
</dbReference>
<dbReference type="Pfam" id="PF00203">
    <property type="entry name" value="Ribosomal_S19"/>
    <property type="match status" value="1"/>
</dbReference>
<dbReference type="PIRSF" id="PIRSF002144">
    <property type="entry name" value="Ribosomal_S19"/>
    <property type="match status" value="1"/>
</dbReference>
<dbReference type="PRINTS" id="PR00975">
    <property type="entry name" value="RIBOSOMALS19"/>
</dbReference>
<dbReference type="SUPFAM" id="SSF54570">
    <property type="entry name" value="Ribosomal protein S19"/>
    <property type="match status" value="1"/>
</dbReference>
<dbReference type="PROSITE" id="PS00323">
    <property type="entry name" value="RIBOSOMAL_S19"/>
    <property type="match status" value="1"/>
</dbReference>
<accession>A0R8I4</accession>
<name>RS19_BACAH</name>
<gene>
    <name evidence="1" type="primary">rpsS</name>
    <name type="ordered locus">BALH_0112</name>
</gene>
<reference key="1">
    <citation type="journal article" date="2007" name="J. Bacteriol.">
        <title>The complete genome sequence of Bacillus thuringiensis Al Hakam.</title>
        <authorList>
            <person name="Challacombe J.F."/>
            <person name="Altherr M.R."/>
            <person name="Xie G."/>
            <person name="Bhotika S.S."/>
            <person name="Brown N."/>
            <person name="Bruce D."/>
            <person name="Campbell C.S."/>
            <person name="Campbell M.L."/>
            <person name="Chen J."/>
            <person name="Chertkov O."/>
            <person name="Cleland C."/>
            <person name="Dimitrijevic M."/>
            <person name="Doggett N.A."/>
            <person name="Fawcett J.J."/>
            <person name="Glavina T."/>
            <person name="Goodwin L.A."/>
            <person name="Green L.D."/>
            <person name="Han C.S."/>
            <person name="Hill K.K."/>
            <person name="Hitchcock P."/>
            <person name="Jackson P.J."/>
            <person name="Keim P."/>
            <person name="Kewalramani A.R."/>
            <person name="Longmire J."/>
            <person name="Lucas S."/>
            <person name="Malfatti S."/>
            <person name="Martinez D."/>
            <person name="McMurry K."/>
            <person name="Meincke L.J."/>
            <person name="Misra M."/>
            <person name="Moseman B.L."/>
            <person name="Mundt M."/>
            <person name="Munk A.C."/>
            <person name="Okinaka R.T."/>
            <person name="Parson-Quintana B."/>
            <person name="Reilly L.P."/>
            <person name="Richardson P."/>
            <person name="Robinson D.L."/>
            <person name="Saunders E."/>
            <person name="Tapia R."/>
            <person name="Tesmer J.G."/>
            <person name="Thayer N."/>
            <person name="Thompson L.S."/>
            <person name="Tice H."/>
            <person name="Ticknor L.O."/>
            <person name="Wills P.L."/>
            <person name="Gilna P."/>
            <person name="Brettin T.S."/>
        </authorList>
    </citation>
    <scope>NUCLEOTIDE SEQUENCE [LARGE SCALE GENOMIC DNA]</scope>
    <source>
        <strain>Al Hakam</strain>
    </source>
</reference>
<proteinExistence type="inferred from homology"/>
<sequence>MARSLKKGPFVDDHLMSKIAKLNETEQKQVVKTWSRRSTIFPQFIGHTIAVYDGRKHVPVYVTEDMVGHKLGEFAPTRTYKGHDADDKKTRR</sequence>